<dbReference type="EC" id="4.1.99.17" evidence="1"/>
<dbReference type="EMBL" id="BX571860">
    <property type="protein sequence ID" value="CAE12781.1"/>
    <property type="molecule type" value="Genomic_DNA"/>
</dbReference>
<dbReference type="RefSeq" id="WP_011144871.1">
    <property type="nucleotide sequence ID" value="NC_005126.1"/>
</dbReference>
<dbReference type="SMR" id="Q7N963"/>
<dbReference type="STRING" id="243265.plu0486"/>
<dbReference type="GeneID" id="48846771"/>
<dbReference type="KEGG" id="plu:plu0486"/>
<dbReference type="eggNOG" id="COG0422">
    <property type="taxonomic scope" value="Bacteria"/>
</dbReference>
<dbReference type="HOGENOM" id="CLU_013181_2_1_6"/>
<dbReference type="OrthoDB" id="9805897at2"/>
<dbReference type="UniPathway" id="UPA00060"/>
<dbReference type="Proteomes" id="UP000002514">
    <property type="component" value="Chromosome"/>
</dbReference>
<dbReference type="GO" id="GO:0005829">
    <property type="term" value="C:cytosol"/>
    <property type="evidence" value="ECO:0007669"/>
    <property type="project" value="TreeGrafter"/>
</dbReference>
<dbReference type="GO" id="GO:0051539">
    <property type="term" value="F:4 iron, 4 sulfur cluster binding"/>
    <property type="evidence" value="ECO:0007669"/>
    <property type="project" value="UniProtKB-KW"/>
</dbReference>
<dbReference type="GO" id="GO:0016830">
    <property type="term" value="F:carbon-carbon lyase activity"/>
    <property type="evidence" value="ECO:0007669"/>
    <property type="project" value="InterPro"/>
</dbReference>
<dbReference type="GO" id="GO:0008270">
    <property type="term" value="F:zinc ion binding"/>
    <property type="evidence" value="ECO:0007669"/>
    <property type="project" value="UniProtKB-UniRule"/>
</dbReference>
<dbReference type="GO" id="GO:0009228">
    <property type="term" value="P:thiamine biosynthetic process"/>
    <property type="evidence" value="ECO:0007669"/>
    <property type="project" value="UniProtKB-KW"/>
</dbReference>
<dbReference type="GO" id="GO:0009229">
    <property type="term" value="P:thiamine diphosphate biosynthetic process"/>
    <property type="evidence" value="ECO:0007669"/>
    <property type="project" value="UniProtKB-UniRule"/>
</dbReference>
<dbReference type="FunFam" id="3.20.20.540:FF:000001">
    <property type="entry name" value="Phosphomethylpyrimidine synthase"/>
    <property type="match status" value="1"/>
</dbReference>
<dbReference type="Gene3D" id="6.10.250.620">
    <property type="match status" value="1"/>
</dbReference>
<dbReference type="Gene3D" id="3.20.20.540">
    <property type="entry name" value="Radical SAM ThiC family, central domain"/>
    <property type="match status" value="1"/>
</dbReference>
<dbReference type="HAMAP" id="MF_00089">
    <property type="entry name" value="ThiC"/>
    <property type="match status" value="1"/>
</dbReference>
<dbReference type="InterPro" id="IPR037509">
    <property type="entry name" value="ThiC"/>
</dbReference>
<dbReference type="InterPro" id="IPR025747">
    <property type="entry name" value="ThiC-associated_dom"/>
</dbReference>
<dbReference type="InterPro" id="IPR038521">
    <property type="entry name" value="ThiC/Bza_core_dom"/>
</dbReference>
<dbReference type="InterPro" id="IPR002817">
    <property type="entry name" value="ThiC/BzaA/B"/>
</dbReference>
<dbReference type="NCBIfam" id="NF006763">
    <property type="entry name" value="PRK09284.1"/>
    <property type="match status" value="1"/>
</dbReference>
<dbReference type="NCBIfam" id="NF009895">
    <property type="entry name" value="PRK13352.1"/>
    <property type="match status" value="1"/>
</dbReference>
<dbReference type="NCBIfam" id="TIGR00190">
    <property type="entry name" value="thiC"/>
    <property type="match status" value="1"/>
</dbReference>
<dbReference type="PANTHER" id="PTHR30557:SF1">
    <property type="entry name" value="PHOSPHOMETHYLPYRIMIDINE SYNTHASE, CHLOROPLASTIC"/>
    <property type="match status" value="1"/>
</dbReference>
<dbReference type="PANTHER" id="PTHR30557">
    <property type="entry name" value="THIAMINE BIOSYNTHESIS PROTEIN THIC"/>
    <property type="match status" value="1"/>
</dbReference>
<dbReference type="Pfam" id="PF13667">
    <property type="entry name" value="ThiC-associated"/>
    <property type="match status" value="1"/>
</dbReference>
<dbReference type="Pfam" id="PF01964">
    <property type="entry name" value="ThiC_Rad_SAM"/>
    <property type="match status" value="1"/>
</dbReference>
<dbReference type="SFLD" id="SFLDF00407">
    <property type="entry name" value="phosphomethylpyrimidine_syntha"/>
    <property type="match status" value="1"/>
</dbReference>
<dbReference type="SFLD" id="SFLDG01114">
    <property type="entry name" value="phosphomethylpyrimidine_syntha"/>
    <property type="match status" value="1"/>
</dbReference>
<dbReference type="SFLD" id="SFLDS00113">
    <property type="entry name" value="Radical_SAM_Phosphomethylpyrim"/>
    <property type="match status" value="1"/>
</dbReference>
<name>THIC_PHOLL</name>
<comment type="function">
    <text evidence="1">Catalyzes the synthesis of the hydroxymethylpyrimidine phosphate (HMP-P) moiety of thiamine from aminoimidazole ribotide (AIR) in a radical S-adenosyl-L-methionine (SAM)-dependent reaction.</text>
</comment>
<comment type="catalytic activity">
    <reaction evidence="1">
        <text>5-amino-1-(5-phospho-beta-D-ribosyl)imidazole + S-adenosyl-L-methionine = 4-amino-2-methyl-5-(phosphooxymethyl)pyrimidine + CO + 5'-deoxyadenosine + formate + L-methionine + 3 H(+)</text>
        <dbReference type="Rhea" id="RHEA:24840"/>
        <dbReference type="ChEBI" id="CHEBI:15378"/>
        <dbReference type="ChEBI" id="CHEBI:15740"/>
        <dbReference type="ChEBI" id="CHEBI:17245"/>
        <dbReference type="ChEBI" id="CHEBI:17319"/>
        <dbReference type="ChEBI" id="CHEBI:57844"/>
        <dbReference type="ChEBI" id="CHEBI:58354"/>
        <dbReference type="ChEBI" id="CHEBI:59789"/>
        <dbReference type="ChEBI" id="CHEBI:137981"/>
        <dbReference type="EC" id="4.1.99.17"/>
    </reaction>
</comment>
<comment type="cofactor">
    <cofactor evidence="1">
        <name>[4Fe-4S] cluster</name>
        <dbReference type="ChEBI" id="CHEBI:49883"/>
    </cofactor>
    <text evidence="1">Binds 1 [4Fe-4S] cluster per subunit. The cluster is coordinated with 3 cysteines and an exchangeable S-adenosyl-L-methionine.</text>
</comment>
<comment type="pathway">
    <text evidence="1">Cofactor biosynthesis; thiamine diphosphate biosynthesis.</text>
</comment>
<comment type="subunit">
    <text evidence="1">Homodimer.</text>
</comment>
<comment type="similarity">
    <text evidence="1">Belongs to the ThiC family.</text>
</comment>
<protein>
    <recommendedName>
        <fullName evidence="1">Phosphomethylpyrimidine synthase</fullName>
        <ecNumber evidence="1">4.1.99.17</ecNumber>
    </recommendedName>
    <alternativeName>
        <fullName evidence="1">Hydroxymethylpyrimidine phosphate synthase</fullName>
        <shortName evidence="1">HMP-P synthase</shortName>
        <shortName evidence="1">HMP-phosphate synthase</shortName>
        <shortName evidence="1">HMPP synthase</shortName>
    </alternativeName>
    <alternativeName>
        <fullName evidence="1">Thiamine biosynthesis protein ThiC</fullName>
    </alternativeName>
</protein>
<organism>
    <name type="scientific">Photorhabdus laumondii subsp. laumondii (strain DSM 15139 / CIP 105565 / TT01)</name>
    <name type="common">Photorhabdus luminescens subsp. laumondii</name>
    <dbReference type="NCBI Taxonomy" id="243265"/>
    <lineage>
        <taxon>Bacteria</taxon>
        <taxon>Pseudomonadati</taxon>
        <taxon>Pseudomonadota</taxon>
        <taxon>Gammaproteobacteria</taxon>
        <taxon>Enterobacterales</taxon>
        <taxon>Morganellaceae</taxon>
        <taxon>Photorhabdus</taxon>
    </lineage>
</organism>
<evidence type="ECO:0000255" key="1">
    <source>
        <dbReference type="HAMAP-Rule" id="MF_00089"/>
    </source>
</evidence>
<evidence type="ECO:0000256" key="2">
    <source>
        <dbReference type="SAM" id="MobiDB-lite"/>
    </source>
</evidence>
<reference key="1">
    <citation type="journal article" date="2003" name="Nat. Biotechnol.">
        <title>The genome sequence of the entomopathogenic bacterium Photorhabdus luminescens.</title>
        <authorList>
            <person name="Duchaud E."/>
            <person name="Rusniok C."/>
            <person name="Frangeul L."/>
            <person name="Buchrieser C."/>
            <person name="Givaudan A."/>
            <person name="Taourit S."/>
            <person name="Bocs S."/>
            <person name="Boursaux-Eude C."/>
            <person name="Chandler M."/>
            <person name="Charles J.-F."/>
            <person name="Dassa E."/>
            <person name="Derose R."/>
            <person name="Derzelle S."/>
            <person name="Freyssinet G."/>
            <person name="Gaudriault S."/>
            <person name="Medigue C."/>
            <person name="Lanois A."/>
            <person name="Powell K."/>
            <person name="Siguier P."/>
            <person name="Vincent R."/>
            <person name="Wingate V."/>
            <person name="Zouine M."/>
            <person name="Glaser P."/>
            <person name="Boemare N."/>
            <person name="Danchin A."/>
            <person name="Kunst F."/>
        </authorList>
    </citation>
    <scope>NUCLEOTIDE SEQUENCE [LARGE SCALE GENOMIC DNA]</scope>
    <source>
        <strain>DSM 15139 / CIP 105565 / TT01</strain>
    </source>
</reference>
<accession>Q7N963</accession>
<proteinExistence type="inferred from homology"/>
<feature type="chain" id="PRO_0000152820" description="Phosphomethylpyrimidine synthase">
    <location>
        <begin position="1"/>
        <end position="645"/>
    </location>
</feature>
<feature type="region of interest" description="Disordered" evidence="2">
    <location>
        <begin position="1"/>
        <end position="25"/>
    </location>
</feature>
<feature type="compositionally biased region" description="Polar residues" evidence="2">
    <location>
        <begin position="1"/>
        <end position="12"/>
    </location>
</feature>
<feature type="binding site" evidence="1">
    <location>
        <position position="253"/>
    </location>
    <ligand>
        <name>substrate</name>
    </ligand>
</feature>
<feature type="binding site" evidence="1">
    <location>
        <position position="282"/>
    </location>
    <ligand>
        <name>substrate</name>
    </ligand>
</feature>
<feature type="binding site" evidence="1">
    <location>
        <position position="311"/>
    </location>
    <ligand>
        <name>substrate</name>
    </ligand>
</feature>
<feature type="binding site" evidence="1">
    <location>
        <position position="347"/>
    </location>
    <ligand>
        <name>substrate</name>
    </ligand>
</feature>
<feature type="binding site" evidence="1">
    <location>
        <begin position="367"/>
        <end position="369"/>
    </location>
    <ligand>
        <name>substrate</name>
    </ligand>
</feature>
<feature type="binding site" evidence="1">
    <location>
        <begin position="408"/>
        <end position="411"/>
    </location>
    <ligand>
        <name>substrate</name>
    </ligand>
</feature>
<feature type="binding site" evidence="1">
    <location>
        <position position="447"/>
    </location>
    <ligand>
        <name>substrate</name>
    </ligand>
</feature>
<feature type="binding site" evidence="1">
    <location>
        <position position="451"/>
    </location>
    <ligand>
        <name>Zn(2+)</name>
        <dbReference type="ChEBI" id="CHEBI:29105"/>
    </ligand>
</feature>
<feature type="binding site" evidence="1">
    <location>
        <position position="474"/>
    </location>
    <ligand>
        <name>substrate</name>
    </ligand>
</feature>
<feature type="binding site" evidence="1">
    <location>
        <position position="515"/>
    </location>
    <ligand>
        <name>Zn(2+)</name>
        <dbReference type="ChEBI" id="CHEBI:29105"/>
    </ligand>
</feature>
<feature type="binding site" evidence="1">
    <location>
        <position position="595"/>
    </location>
    <ligand>
        <name>[4Fe-4S] cluster</name>
        <dbReference type="ChEBI" id="CHEBI:49883"/>
        <note>4Fe-4S-S-AdoMet</note>
    </ligand>
</feature>
<feature type="binding site" evidence="1">
    <location>
        <position position="598"/>
    </location>
    <ligand>
        <name>[4Fe-4S] cluster</name>
        <dbReference type="ChEBI" id="CHEBI:49883"/>
        <note>4Fe-4S-S-AdoMet</note>
    </ligand>
</feature>
<feature type="binding site" evidence="1">
    <location>
        <position position="603"/>
    </location>
    <ligand>
        <name>[4Fe-4S] cluster</name>
        <dbReference type="ChEBI" id="CHEBI:49883"/>
        <note>4Fe-4S-S-AdoMet</note>
    </ligand>
</feature>
<sequence length="645" mass="72476">MSHNTVIPTTDISPKPDPARPRKAQRDAAQEFINSIQGVTFPNSRRIYLQGSRDDIQVPMREIQLSPTLIGGTKEEPQYEENEAIPVYDTSGAYGDPDAKLDVHVGLTQLRQPWIDERQDTEPVAALSSDFTQQRLTDAGLDHLRFNHRPHPLKARKDKRVTQLHYARQGIITPEMEFIALRENMGRERIRGDVLRQQHPGQSFGAQLPENITPEFVRQEVAAGRAIIPANINHPESEPMIIGRNFLVKVNANIGNSSVTSSIEEEVEKLIWSTRWGADTVMDLSTGRYIHETREWILRNSPVPIGTVPIYQALEKVNGGAENLTWEIFRDTLLEQAEQGVDYFTIHAGVLLRYVPMTAKRLTGIVSRGGSIMAKWCLSHHQENFLYQHFREICEICAAYDVSLSLGDGLRPGSIQDANDEAQFAELHTLGELTKIAWEYDVQVMIEGPGHIPMQMIRRNMTEELEHCHEAPFYTLGPLTTDIAPGYDHFTSGIGAAMIGWFGCAMLCYVTPKEHLGLPNKDDVKQGLITYKIAAHAADLAKGHPGAQIRDNAMSKARFEFRWEDQFNLALDPDTARAYHDETLPQASGKIAHFCSMCGPKFCSMKISQEVRDYAAGMEQMSEAFRAHGSELYHSVEDVSHEQSA</sequence>
<gene>
    <name evidence="1" type="primary">thiC</name>
    <name type="ordered locus">plu0486</name>
</gene>
<keyword id="KW-0004">4Fe-4S</keyword>
<keyword id="KW-0408">Iron</keyword>
<keyword id="KW-0411">Iron-sulfur</keyword>
<keyword id="KW-0456">Lyase</keyword>
<keyword id="KW-0479">Metal-binding</keyword>
<keyword id="KW-1185">Reference proteome</keyword>
<keyword id="KW-0949">S-adenosyl-L-methionine</keyword>
<keyword id="KW-0784">Thiamine biosynthesis</keyword>
<keyword id="KW-0862">Zinc</keyword>